<organism>
    <name type="scientific">Haemophilus influenzae (strain 86-028NP)</name>
    <dbReference type="NCBI Taxonomy" id="281310"/>
    <lineage>
        <taxon>Bacteria</taxon>
        <taxon>Pseudomonadati</taxon>
        <taxon>Pseudomonadota</taxon>
        <taxon>Gammaproteobacteria</taxon>
        <taxon>Pasteurellales</taxon>
        <taxon>Pasteurellaceae</taxon>
        <taxon>Haemophilus</taxon>
    </lineage>
</organism>
<sequence>MINNPLLTVKNLNKFFNEQQVLHDISFSLQRGEILFLLGASGCGKTTLLRAIAGFEHPNTGEIWLKERLIFGENFNLPTQQRHLGYVVQEGVLFPHLNVYRNIAYGLGNGKGKNSEEKTRIEQIMQLTGIFELADRFPHQLSGGQQQRVALARALAPNPELILLDEPFSALDEHLRQQIRQEMLQALRQSGASAIFVTHDRDESLRYADKIAIIQQGKILQIDTPRTLYWSPNHLETAKFMGESIVLPANLLDENTAQCQLGNIPIKNKSISQNQGRILLRPEQFSLFKTSENPTALFNGQIKQIEFKGKITSIQIEINGYAIWIENVISPDLSIGDNLPVYLHRKGLFYA</sequence>
<dbReference type="EC" id="7.2.2.7" evidence="1"/>
<dbReference type="EMBL" id="CP000057">
    <property type="protein sequence ID" value="AAX87162.1"/>
    <property type="molecule type" value="Genomic_DNA"/>
</dbReference>
<dbReference type="SMR" id="Q4QP85"/>
<dbReference type="KEGG" id="hit:NTHI0180"/>
<dbReference type="HOGENOM" id="CLU_000604_1_1_6"/>
<dbReference type="Proteomes" id="UP000002525">
    <property type="component" value="Chromosome"/>
</dbReference>
<dbReference type="GO" id="GO:0005886">
    <property type="term" value="C:plasma membrane"/>
    <property type="evidence" value="ECO:0007669"/>
    <property type="project" value="UniProtKB-SubCell"/>
</dbReference>
<dbReference type="GO" id="GO:0015408">
    <property type="term" value="F:ABC-type ferric iron transporter activity"/>
    <property type="evidence" value="ECO:0007669"/>
    <property type="project" value="UniProtKB-EC"/>
</dbReference>
<dbReference type="GO" id="GO:0005524">
    <property type="term" value="F:ATP binding"/>
    <property type="evidence" value="ECO:0007669"/>
    <property type="project" value="UniProtKB-KW"/>
</dbReference>
<dbReference type="GO" id="GO:0016887">
    <property type="term" value="F:ATP hydrolysis activity"/>
    <property type="evidence" value="ECO:0007669"/>
    <property type="project" value="InterPro"/>
</dbReference>
<dbReference type="CDD" id="cd03259">
    <property type="entry name" value="ABC_Carb_Solutes_like"/>
    <property type="match status" value="1"/>
</dbReference>
<dbReference type="FunFam" id="3.40.50.300:FF:000133">
    <property type="entry name" value="Spermidine/putrescine import ATP-binding protein PotA"/>
    <property type="match status" value="1"/>
</dbReference>
<dbReference type="Gene3D" id="2.40.50.450">
    <property type="match status" value="1"/>
</dbReference>
<dbReference type="Gene3D" id="3.40.50.300">
    <property type="entry name" value="P-loop containing nucleotide triphosphate hydrolases"/>
    <property type="match status" value="1"/>
</dbReference>
<dbReference type="InterPro" id="IPR003593">
    <property type="entry name" value="AAA+_ATPase"/>
</dbReference>
<dbReference type="InterPro" id="IPR050093">
    <property type="entry name" value="ABC_SmlMolc_Importer"/>
</dbReference>
<dbReference type="InterPro" id="IPR003439">
    <property type="entry name" value="ABC_transporter-like_ATP-bd"/>
</dbReference>
<dbReference type="InterPro" id="IPR017871">
    <property type="entry name" value="ABC_transporter-like_CS"/>
</dbReference>
<dbReference type="InterPro" id="IPR015853">
    <property type="entry name" value="ABC_transpr_FbpC"/>
</dbReference>
<dbReference type="InterPro" id="IPR008995">
    <property type="entry name" value="Mo/tungstate-bd_C_term_dom"/>
</dbReference>
<dbReference type="InterPro" id="IPR027417">
    <property type="entry name" value="P-loop_NTPase"/>
</dbReference>
<dbReference type="PANTHER" id="PTHR42781:SF5">
    <property type="entry name" value="PUTRESCINE TRANSPORT ATP-BINDING PROTEIN POTG"/>
    <property type="match status" value="1"/>
</dbReference>
<dbReference type="PANTHER" id="PTHR42781">
    <property type="entry name" value="SPERMIDINE/PUTRESCINE IMPORT ATP-BINDING PROTEIN POTA"/>
    <property type="match status" value="1"/>
</dbReference>
<dbReference type="Pfam" id="PF00005">
    <property type="entry name" value="ABC_tran"/>
    <property type="match status" value="1"/>
</dbReference>
<dbReference type="SMART" id="SM00382">
    <property type="entry name" value="AAA"/>
    <property type="match status" value="1"/>
</dbReference>
<dbReference type="SUPFAM" id="SSF50331">
    <property type="entry name" value="MOP-like"/>
    <property type="match status" value="1"/>
</dbReference>
<dbReference type="SUPFAM" id="SSF52540">
    <property type="entry name" value="P-loop containing nucleoside triphosphate hydrolases"/>
    <property type="match status" value="1"/>
</dbReference>
<dbReference type="PROSITE" id="PS00211">
    <property type="entry name" value="ABC_TRANSPORTER_1"/>
    <property type="match status" value="1"/>
</dbReference>
<dbReference type="PROSITE" id="PS50893">
    <property type="entry name" value="ABC_TRANSPORTER_2"/>
    <property type="match status" value="1"/>
</dbReference>
<dbReference type="PROSITE" id="PS51242">
    <property type="entry name" value="FBPC"/>
    <property type="match status" value="1"/>
</dbReference>
<gene>
    <name evidence="1" type="primary">fbpC</name>
    <name type="synonym">hitC</name>
    <name type="ordered locus">NTHI0180</name>
</gene>
<protein>
    <recommendedName>
        <fullName evidence="1">Fe(3+) ions import ATP-binding protein FbpC</fullName>
        <ecNumber evidence="1">7.2.2.7</ecNumber>
    </recommendedName>
</protein>
<proteinExistence type="inferred from homology"/>
<name>FBPC_HAEI8</name>
<keyword id="KW-0067">ATP-binding</keyword>
<keyword id="KW-0997">Cell inner membrane</keyword>
<keyword id="KW-1003">Cell membrane</keyword>
<keyword id="KW-0406">Ion transport</keyword>
<keyword id="KW-0408">Iron</keyword>
<keyword id="KW-0410">Iron transport</keyword>
<keyword id="KW-0472">Membrane</keyword>
<keyword id="KW-0547">Nucleotide-binding</keyword>
<keyword id="KW-1278">Translocase</keyword>
<keyword id="KW-0813">Transport</keyword>
<accession>Q4QP85</accession>
<feature type="chain" id="PRO_0000272038" description="Fe(3+) ions import ATP-binding protein FbpC">
    <location>
        <begin position="1"/>
        <end position="351"/>
    </location>
</feature>
<feature type="domain" description="ABC transporter" evidence="1">
    <location>
        <begin position="7"/>
        <end position="241"/>
    </location>
</feature>
<feature type="binding site" evidence="1">
    <location>
        <begin position="39"/>
        <end position="46"/>
    </location>
    <ligand>
        <name>ATP</name>
        <dbReference type="ChEBI" id="CHEBI:30616"/>
    </ligand>
</feature>
<evidence type="ECO:0000255" key="1">
    <source>
        <dbReference type="HAMAP-Rule" id="MF_01706"/>
    </source>
</evidence>
<reference key="1">
    <citation type="journal article" date="2005" name="J. Bacteriol.">
        <title>Genomic sequence of an otitis media isolate of nontypeable Haemophilus influenzae: comparative study with H. influenzae serotype d, strain KW20.</title>
        <authorList>
            <person name="Harrison A."/>
            <person name="Dyer D.W."/>
            <person name="Gillaspy A."/>
            <person name="Ray W.C."/>
            <person name="Mungur R."/>
            <person name="Carson M.B."/>
            <person name="Zhong H."/>
            <person name="Gipson J."/>
            <person name="Gipson M."/>
            <person name="Johnson L.S."/>
            <person name="Lewis L."/>
            <person name="Bakaletz L.O."/>
            <person name="Munson R.S. Jr."/>
        </authorList>
    </citation>
    <scope>NUCLEOTIDE SEQUENCE [LARGE SCALE GENOMIC DNA]</scope>
    <source>
        <strain>86-028NP</strain>
    </source>
</reference>
<comment type="function">
    <text evidence="1">Part of the ABC transporter complex FbpABC involved in Fe(3+) ions import. Responsible for energy coupling to the transport system.</text>
</comment>
<comment type="catalytic activity">
    <reaction evidence="1">
        <text>Fe(3+)(out) + ATP + H2O = Fe(3+)(in) + ADP + phosphate + H(+)</text>
        <dbReference type="Rhea" id="RHEA:12332"/>
        <dbReference type="ChEBI" id="CHEBI:15377"/>
        <dbReference type="ChEBI" id="CHEBI:15378"/>
        <dbReference type="ChEBI" id="CHEBI:29034"/>
        <dbReference type="ChEBI" id="CHEBI:30616"/>
        <dbReference type="ChEBI" id="CHEBI:43474"/>
        <dbReference type="ChEBI" id="CHEBI:456216"/>
        <dbReference type="EC" id="7.2.2.7"/>
    </reaction>
</comment>
<comment type="subunit">
    <text evidence="1">The complex is composed of two ATP-binding proteins (FbpC), two transmembrane proteins (FbpB) and a solute-binding protein (FbpA).</text>
</comment>
<comment type="subcellular location">
    <subcellularLocation>
        <location evidence="1">Cell inner membrane</location>
        <topology evidence="1">Peripheral membrane protein</topology>
    </subcellularLocation>
</comment>
<comment type="similarity">
    <text evidence="1">Belongs to the ABC transporter superfamily. Fe(3+) ion importer (TC 3.A.1.10) family.</text>
</comment>